<evidence type="ECO:0000255" key="1">
    <source>
        <dbReference type="HAMAP-Rule" id="MF_01576"/>
    </source>
</evidence>
<reference key="1">
    <citation type="submission" date="2006-12" db="EMBL/GenBank/DDBJ databases">
        <title>Complete sequence of chromosome 1 of Nocardioides sp. JS614.</title>
        <authorList>
            <person name="Copeland A."/>
            <person name="Lucas S."/>
            <person name="Lapidus A."/>
            <person name="Barry K."/>
            <person name="Detter J.C."/>
            <person name="Glavina del Rio T."/>
            <person name="Hammon N."/>
            <person name="Israni S."/>
            <person name="Dalin E."/>
            <person name="Tice H."/>
            <person name="Pitluck S."/>
            <person name="Thompson L.S."/>
            <person name="Brettin T."/>
            <person name="Bruce D."/>
            <person name="Han C."/>
            <person name="Tapia R."/>
            <person name="Schmutz J."/>
            <person name="Larimer F."/>
            <person name="Land M."/>
            <person name="Hauser L."/>
            <person name="Kyrpides N."/>
            <person name="Kim E."/>
            <person name="Mattes T."/>
            <person name="Gossett J."/>
            <person name="Richardson P."/>
        </authorList>
    </citation>
    <scope>NUCLEOTIDE SEQUENCE [LARGE SCALE GENOMIC DNA]</scope>
    <source>
        <strain>ATCC BAA-499 / JS614</strain>
    </source>
</reference>
<keyword id="KW-0028">Amino-acid biosynthesis</keyword>
<keyword id="KW-0368">Histidine biosynthesis</keyword>
<keyword id="KW-0378">Hydrolase</keyword>
<keyword id="KW-0486">Methionine biosynthesis</keyword>
<keyword id="KW-0511">Multifunctional enzyme</keyword>
<keyword id="KW-0521">NADP</keyword>
<keyword id="KW-0554">One-carbon metabolism</keyword>
<keyword id="KW-0560">Oxidoreductase</keyword>
<keyword id="KW-0658">Purine biosynthesis</keyword>
<keyword id="KW-1185">Reference proteome</keyword>
<dbReference type="EC" id="1.5.1.5" evidence="1"/>
<dbReference type="EC" id="3.5.4.9" evidence="1"/>
<dbReference type="EMBL" id="CP000509">
    <property type="protein sequence ID" value="ABL83082.1"/>
    <property type="molecule type" value="Genomic_DNA"/>
</dbReference>
<dbReference type="RefSeq" id="WP_011757013.1">
    <property type="nucleotide sequence ID" value="NC_008699.1"/>
</dbReference>
<dbReference type="SMR" id="A1SMP7"/>
<dbReference type="STRING" id="196162.Noca_3582"/>
<dbReference type="KEGG" id="nca:Noca_3582"/>
<dbReference type="eggNOG" id="COG0190">
    <property type="taxonomic scope" value="Bacteria"/>
</dbReference>
<dbReference type="HOGENOM" id="CLU_034045_3_0_11"/>
<dbReference type="OrthoDB" id="9803580at2"/>
<dbReference type="UniPathway" id="UPA00193"/>
<dbReference type="Proteomes" id="UP000000640">
    <property type="component" value="Chromosome"/>
</dbReference>
<dbReference type="GO" id="GO:0005829">
    <property type="term" value="C:cytosol"/>
    <property type="evidence" value="ECO:0007669"/>
    <property type="project" value="TreeGrafter"/>
</dbReference>
<dbReference type="GO" id="GO:0004477">
    <property type="term" value="F:methenyltetrahydrofolate cyclohydrolase activity"/>
    <property type="evidence" value="ECO:0007669"/>
    <property type="project" value="UniProtKB-UniRule"/>
</dbReference>
<dbReference type="GO" id="GO:0004488">
    <property type="term" value="F:methylenetetrahydrofolate dehydrogenase (NADP+) activity"/>
    <property type="evidence" value="ECO:0007669"/>
    <property type="project" value="UniProtKB-UniRule"/>
</dbReference>
<dbReference type="GO" id="GO:0000105">
    <property type="term" value="P:L-histidine biosynthetic process"/>
    <property type="evidence" value="ECO:0007669"/>
    <property type="project" value="UniProtKB-KW"/>
</dbReference>
<dbReference type="GO" id="GO:0009086">
    <property type="term" value="P:methionine biosynthetic process"/>
    <property type="evidence" value="ECO:0007669"/>
    <property type="project" value="UniProtKB-KW"/>
</dbReference>
<dbReference type="GO" id="GO:0006164">
    <property type="term" value="P:purine nucleotide biosynthetic process"/>
    <property type="evidence" value="ECO:0007669"/>
    <property type="project" value="UniProtKB-KW"/>
</dbReference>
<dbReference type="GO" id="GO:0035999">
    <property type="term" value="P:tetrahydrofolate interconversion"/>
    <property type="evidence" value="ECO:0007669"/>
    <property type="project" value="UniProtKB-UniRule"/>
</dbReference>
<dbReference type="CDD" id="cd01080">
    <property type="entry name" value="NAD_bind_m-THF_DH_Cyclohyd"/>
    <property type="match status" value="1"/>
</dbReference>
<dbReference type="FunFam" id="3.40.50.720:FF:000094">
    <property type="entry name" value="Bifunctional protein FolD"/>
    <property type="match status" value="1"/>
</dbReference>
<dbReference type="FunFam" id="3.40.50.10860:FF:000005">
    <property type="entry name" value="C-1-tetrahydrofolate synthase, cytoplasmic, putative"/>
    <property type="match status" value="1"/>
</dbReference>
<dbReference type="Gene3D" id="3.40.50.10860">
    <property type="entry name" value="Leucine Dehydrogenase, chain A, domain 1"/>
    <property type="match status" value="1"/>
</dbReference>
<dbReference type="Gene3D" id="3.40.50.720">
    <property type="entry name" value="NAD(P)-binding Rossmann-like Domain"/>
    <property type="match status" value="1"/>
</dbReference>
<dbReference type="HAMAP" id="MF_01576">
    <property type="entry name" value="THF_DHG_CYH"/>
    <property type="match status" value="1"/>
</dbReference>
<dbReference type="InterPro" id="IPR046346">
    <property type="entry name" value="Aminoacid_DH-like_N_sf"/>
</dbReference>
<dbReference type="InterPro" id="IPR036291">
    <property type="entry name" value="NAD(P)-bd_dom_sf"/>
</dbReference>
<dbReference type="InterPro" id="IPR000672">
    <property type="entry name" value="THF_DH/CycHdrlase"/>
</dbReference>
<dbReference type="InterPro" id="IPR020630">
    <property type="entry name" value="THF_DH/CycHdrlase_cat_dom"/>
</dbReference>
<dbReference type="InterPro" id="IPR020631">
    <property type="entry name" value="THF_DH/CycHdrlase_NAD-bd_dom"/>
</dbReference>
<dbReference type="NCBIfam" id="NF010789">
    <property type="entry name" value="PRK14193.1"/>
    <property type="match status" value="1"/>
</dbReference>
<dbReference type="PANTHER" id="PTHR48099:SF5">
    <property type="entry name" value="C-1-TETRAHYDROFOLATE SYNTHASE, CYTOPLASMIC"/>
    <property type="match status" value="1"/>
</dbReference>
<dbReference type="PANTHER" id="PTHR48099">
    <property type="entry name" value="C-1-TETRAHYDROFOLATE SYNTHASE, CYTOPLASMIC-RELATED"/>
    <property type="match status" value="1"/>
</dbReference>
<dbReference type="Pfam" id="PF00763">
    <property type="entry name" value="THF_DHG_CYH"/>
    <property type="match status" value="1"/>
</dbReference>
<dbReference type="Pfam" id="PF02882">
    <property type="entry name" value="THF_DHG_CYH_C"/>
    <property type="match status" value="1"/>
</dbReference>
<dbReference type="PRINTS" id="PR00085">
    <property type="entry name" value="THFDHDRGNASE"/>
</dbReference>
<dbReference type="SUPFAM" id="SSF53223">
    <property type="entry name" value="Aminoacid dehydrogenase-like, N-terminal domain"/>
    <property type="match status" value="1"/>
</dbReference>
<dbReference type="SUPFAM" id="SSF51735">
    <property type="entry name" value="NAD(P)-binding Rossmann-fold domains"/>
    <property type="match status" value="1"/>
</dbReference>
<feature type="chain" id="PRO_0000305854" description="Bifunctional protein FolD 2">
    <location>
        <begin position="1"/>
        <end position="283"/>
    </location>
</feature>
<feature type="binding site" evidence="1">
    <location>
        <begin position="165"/>
        <end position="167"/>
    </location>
    <ligand>
        <name>NADP(+)</name>
        <dbReference type="ChEBI" id="CHEBI:58349"/>
    </ligand>
</feature>
<feature type="binding site" evidence="1">
    <location>
        <position position="192"/>
    </location>
    <ligand>
        <name>NADP(+)</name>
        <dbReference type="ChEBI" id="CHEBI:58349"/>
    </ligand>
</feature>
<feature type="binding site" evidence="1">
    <location>
        <position position="233"/>
    </location>
    <ligand>
        <name>NADP(+)</name>
        <dbReference type="ChEBI" id="CHEBI:58349"/>
    </ligand>
</feature>
<proteinExistence type="inferred from homology"/>
<sequence>MTAQKLDGTATAAAIKGELTTRVAALHERGIRPGLGTILVGDDPGSRWYVNGKHKDCAEVGIESIRIDLPATATQDEIEDAVRVLNDDPACTGYIVQLPLPKGRDENRVLGLIDPAKDADGLHPTNLGWLVLGKAAPLPCTPNGIVELLRRHGVEIAGAEVTVVGRGVTVGRPLGLLLTRRSENATVTLCHTGTRDLAAHVRGADIVVAAAGVPGIVTGAMVKPGAAVLDVGVSRVDGKLAGDVAPEVWDVARWVSPNPGGVGPMTRAMLLSNIVAMAEQTDS</sequence>
<comment type="function">
    <text evidence="1">Catalyzes the oxidation of 5,10-methylenetetrahydrofolate to 5,10-methenyltetrahydrofolate and then the hydrolysis of 5,10-methenyltetrahydrofolate to 10-formyltetrahydrofolate.</text>
</comment>
<comment type="catalytic activity">
    <reaction evidence="1">
        <text>(6R)-5,10-methylene-5,6,7,8-tetrahydrofolate + NADP(+) = (6R)-5,10-methenyltetrahydrofolate + NADPH</text>
        <dbReference type="Rhea" id="RHEA:22812"/>
        <dbReference type="ChEBI" id="CHEBI:15636"/>
        <dbReference type="ChEBI" id="CHEBI:57455"/>
        <dbReference type="ChEBI" id="CHEBI:57783"/>
        <dbReference type="ChEBI" id="CHEBI:58349"/>
        <dbReference type="EC" id="1.5.1.5"/>
    </reaction>
</comment>
<comment type="catalytic activity">
    <reaction evidence="1">
        <text>(6R)-5,10-methenyltetrahydrofolate + H2O = (6R)-10-formyltetrahydrofolate + H(+)</text>
        <dbReference type="Rhea" id="RHEA:23700"/>
        <dbReference type="ChEBI" id="CHEBI:15377"/>
        <dbReference type="ChEBI" id="CHEBI:15378"/>
        <dbReference type="ChEBI" id="CHEBI:57455"/>
        <dbReference type="ChEBI" id="CHEBI:195366"/>
        <dbReference type="EC" id="3.5.4.9"/>
    </reaction>
</comment>
<comment type="pathway">
    <text evidence="1">One-carbon metabolism; tetrahydrofolate interconversion.</text>
</comment>
<comment type="subunit">
    <text evidence="1">Homodimer.</text>
</comment>
<comment type="similarity">
    <text evidence="1">Belongs to the tetrahydrofolate dehydrogenase/cyclohydrolase family.</text>
</comment>
<name>FOLD2_NOCSJ</name>
<protein>
    <recommendedName>
        <fullName evidence="1">Bifunctional protein FolD 2</fullName>
    </recommendedName>
    <domain>
        <recommendedName>
            <fullName evidence="1">Methylenetetrahydrofolate dehydrogenase</fullName>
            <ecNumber evidence="1">1.5.1.5</ecNumber>
        </recommendedName>
    </domain>
    <domain>
        <recommendedName>
            <fullName evidence="1">Methenyltetrahydrofolate cyclohydrolase</fullName>
            <ecNumber evidence="1">3.5.4.9</ecNumber>
        </recommendedName>
    </domain>
</protein>
<gene>
    <name evidence="1" type="primary">folD2</name>
    <name type="ordered locus">Noca_3582</name>
</gene>
<accession>A1SMP7</accession>
<organism>
    <name type="scientific">Nocardioides sp. (strain ATCC BAA-499 / JS614)</name>
    <dbReference type="NCBI Taxonomy" id="196162"/>
    <lineage>
        <taxon>Bacteria</taxon>
        <taxon>Bacillati</taxon>
        <taxon>Actinomycetota</taxon>
        <taxon>Actinomycetes</taxon>
        <taxon>Propionibacteriales</taxon>
        <taxon>Nocardioidaceae</taxon>
        <taxon>Nocardioides</taxon>
    </lineage>
</organism>